<comment type="function">
    <text evidence="1">S-adenosyl-L-methionine-dependent methyltransferase that mediates mRNA cap1 2'-O-ribose methylation to the 5'-cap structure of mRNAs. Methylates the ribose of the first nucleotide of a m(7)GpppG-capped mRNA and small nuclear RNA (snRNA) to produce m(7)GpppRm (cap1). Displays a preference for cap0 transcripts. Cap1 modification is linked to higher levels of translation. May be involved in the interferon response pathway.</text>
</comment>
<comment type="catalytic activity">
    <reaction evidence="1">
        <text>a 5'-end (N(7)-methyl 5'-triphosphoguanosine)-ribonucleoside in mRNA + S-adenosyl-L-methionine = a 5'-end (N(7)-methyl 5'-triphosphoguanosine)-(2'-O-methyl-ribonucleoside) in mRNA + S-adenosyl-L-homocysteine + H(+)</text>
        <dbReference type="Rhea" id="RHEA:67020"/>
        <dbReference type="Rhea" id="RHEA-COMP:17167"/>
        <dbReference type="Rhea" id="RHEA-COMP:17168"/>
        <dbReference type="ChEBI" id="CHEBI:15378"/>
        <dbReference type="ChEBI" id="CHEBI:57856"/>
        <dbReference type="ChEBI" id="CHEBI:59789"/>
        <dbReference type="ChEBI" id="CHEBI:156461"/>
        <dbReference type="ChEBI" id="CHEBI:167609"/>
        <dbReference type="EC" id="2.1.1.57"/>
    </reaction>
</comment>
<comment type="subcellular location">
    <subcellularLocation>
        <location evidence="1">Nucleus</location>
    </subcellularLocation>
</comment>
<name>CMTR1_XENLA</name>
<proteinExistence type="evidence at transcript level"/>
<gene>
    <name type="primary">cmtr1</name>
    <name type="synonym">ftsjd2</name>
</gene>
<organism>
    <name type="scientific">Xenopus laevis</name>
    <name type="common">African clawed frog</name>
    <dbReference type="NCBI Taxonomy" id="8355"/>
    <lineage>
        <taxon>Eukaryota</taxon>
        <taxon>Metazoa</taxon>
        <taxon>Chordata</taxon>
        <taxon>Craniata</taxon>
        <taxon>Vertebrata</taxon>
        <taxon>Euteleostomi</taxon>
        <taxon>Amphibia</taxon>
        <taxon>Batrachia</taxon>
        <taxon>Anura</taxon>
        <taxon>Pipoidea</taxon>
        <taxon>Pipidae</taxon>
        <taxon>Xenopodinae</taxon>
        <taxon>Xenopus</taxon>
        <taxon>Xenopus</taxon>
    </lineage>
</organism>
<protein>
    <recommendedName>
        <fullName>Cap-specific mRNA (nucleoside-2'-O-)-methyltransferase 1</fullName>
        <ecNumber evidence="1">2.1.1.57</ecNumber>
    </recommendedName>
    <alternativeName>
        <fullName>Cap methyltransferase 1</fullName>
    </alternativeName>
    <alternativeName>
        <fullName>Cap1 2'O-ribose methyltransferase 1</fullName>
        <shortName>MTr1</shortName>
    </alternativeName>
    <alternativeName>
        <fullName>FtsJ methyltransferase domain-containing protein 2</fullName>
    </alternativeName>
</protein>
<accession>Q6GQ76</accession>
<feature type="chain" id="PRO_0000251244" description="Cap-specific mRNA (nucleoside-2'-O-)-methyltransferase 1">
    <location>
        <begin position="1"/>
        <end position="846"/>
    </location>
</feature>
<feature type="domain" description="G-patch" evidence="2">
    <location>
        <begin position="87"/>
        <end position="133"/>
    </location>
</feature>
<feature type="domain" description="RrmJ-type SAM-dependent 2'-O-MTase" evidence="5">
    <location>
        <begin position="231"/>
        <end position="450"/>
    </location>
</feature>
<feature type="domain" description="WW" evidence="3">
    <location>
        <begin position="752"/>
        <end position="786"/>
    </location>
</feature>
<feature type="region of interest" description="Disordered" evidence="6">
    <location>
        <begin position="1"/>
        <end position="81"/>
    </location>
</feature>
<feature type="short sequence motif" description="Bipartite nuclear localization signal" evidence="4">
    <location>
        <begin position="2"/>
        <end position="20"/>
    </location>
</feature>
<feature type="compositionally biased region" description="Polar residues" evidence="6">
    <location>
        <begin position="27"/>
        <end position="45"/>
    </location>
</feature>
<feature type="active site" evidence="1">
    <location>
        <position position="239"/>
    </location>
</feature>
<feature type="active site" evidence="1">
    <location>
        <position position="364"/>
    </location>
</feature>
<feature type="active site" description="Proton acceptor" evidence="5">
    <location>
        <position position="404"/>
    </location>
</feature>
<feature type="binding site" evidence="1">
    <location>
        <begin position="203"/>
        <end position="207"/>
    </location>
    <ligand>
        <name>substrate</name>
    </ligand>
</feature>
<feature type="binding site" evidence="1">
    <location>
        <position position="218"/>
    </location>
    <ligand>
        <name>substrate</name>
    </ligand>
</feature>
<feature type="binding site" evidence="1">
    <location>
        <position position="234"/>
    </location>
    <ligand>
        <name>S-adenosyl-L-methionine</name>
        <dbReference type="ChEBI" id="CHEBI:59789"/>
    </ligand>
</feature>
<feature type="binding site" evidence="1">
    <location>
        <begin position="277"/>
        <end position="283"/>
    </location>
    <ligand>
        <name>S-adenosyl-L-methionine</name>
        <dbReference type="ChEBI" id="CHEBI:59789"/>
    </ligand>
</feature>
<feature type="binding site" evidence="1">
    <location>
        <begin position="335"/>
        <end position="336"/>
    </location>
    <ligand>
        <name>S-adenosyl-L-methionine</name>
        <dbReference type="ChEBI" id="CHEBI:59789"/>
    </ligand>
</feature>
<feature type="binding site" evidence="1">
    <location>
        <begin position="374"/>
        <end position="376"/>
    </location>
    <ligand>
        <name>substrate</name>
    </ligand>
</feature>
<feature type="binding site" evidence="1">
    <location>
        <position position="439"/>
    </location>
    <ligand>
        <name>substrate</name>
    </ligand>
</feature>
<sequence>MKRKSDSEQQPSVQCRKKKRIEELGLNLSSTSDDDTQYSNHGTQESSTSSTSSDSDNEEKRPVFGSGRNETLPDTLAEGSSSHYSMYNSVSQKLMAKMGFREGEGLGKFGQGRKEIVETSKQKGRRGLGMVLKGFEKELNINWRSEPEATAYEEVDWFPECTTDIPDSDELSDWMIVGKRKLIIDDETEFCRDNLLTSLLQCKSAFDELEGEEMRRARTRSNPYEMIRGVFFLNRAAMKMANIDHVFDYMFTNPKDSQGKPKLKDKESELLYFADVCAGPGGFSEYVLWRKKWHAKGFGMTLKGPNDFKLEDFYAAPSELFEPYYGEGGVDGDGDVTRPENITAFRNFILDNTDHKGVHFMMADGGFSVEGQENIQEILSKQLLLCQFLVGLHVIRTGGHFICKTFDLFTPFSVGLIYLLYCCFERVCLFKPLTSRPANSERYVVCRGLKEGIDDVRNYLFNVNRRLNHLRNSDQDVTLVVPLEVLRGDKQFNEYMVRSNESCCEVQIKALAKIHAFVQDSTLSESRQADIRRECLKLWGVPDQARVAPTNTDARTKFFQLIQSQNIEVFGYKPTPLTAKTLEKLIHVFDYRCMVCGSEPKFLLGLGRSQIYTWGGRSNERWTRLDLKTELPRDTLLSVEIVHELKGEGKAQRKISAIHVLDVLFLNGTDVRTQHFTQRIQLAEKFVRAVAKPSRPDMNPIRVKEVYRLEDIEKIFLRLDMKHIKSSGGYLRLSYTGRDDRHFVPCGLYIVKTINEPWSMAYSKSQKRKYFYNSKTKNSQFELPVESIAPFHTCYYERLFWEWGEGVQIHDSQRRDPDSDKLSKDAVLQFIQAHHPCMPSSLTEDR</sequence>
<reference key="1">
    <citation type="submission" date="2004-06" db="EMBL/GenBank/DDBJ databases">
        <authorList>
            <consortium name="NIH - Xenopus Gene Collection (XGC) project"/>
        </authorList>
    </citation>
    <scope>NUCLEOTIDE SEQUENCE [LARGE SCALE MRNA]</scope>
    <source>
        <tissue>Ovary</tissue>
    </source>
</reference>
<dbReference type="EC" id="2.1.1.57" evidence="1"/>
<dbReference type="EMBL" id="BC072871">
    <property type="protein sequence ID" value="AAH72871.1"/>
    <property type="molecule type" value="mRNA"/>
</dbReference>
<dbReference type="RefSeq" id="NP_001085512.1">
    <property type="nucleotide sequence ID" value="NM_001092043.1"/>
</dbReference>
<dbReference type="SMR" id="Q6GQ76"/>
<dbReference type="BioGRID" id="102101">
    <property type="interactions" value="1"/>
</dbReference>
<dbReference type="IntAct" id="Q6GQ76">
    <property type="interactions" value="1"/>
</dbReference>
<dbReference type="DNASU" id="443938"/>
<dbReference type="GeneID" id="443938"/>
<dbReference type="KEGG" id="xla:443938"/>
<dbReference type="AGR" id="Xenbase:XB-GENE-970210"/>
<dbReference type="CTD" id="443938"/>
<dbReference type="Xenbase" id="XB-GENE-970210">
    <property type="gene designation" value="cmtr1.S"/>
</dbReference>
<dbReference type="OrthoDB" id="10251234at2759"/>
<dbReference type="Proteomes" id="UP000186698">
    <property type="component" value="Chromosome 5S"/>
</dbReference>
<dbReference type="Bgee" id="443938">
    <property type="expression patterns" value="Expressed in spleen and 20 other cell types or tissues"/>
</dbReference>
<dbReference type="GO" id="GO:0005737">
    <property type="term" value="C:cytoplasm"/>
    <property type="evidence" value="ECO:0000318"/>
    <property type="project" value="GO_Central"/>
</dbReference>
<dbReference type="GO" id="GO:0005634">
    <property type="term" value="C:nucleus"/>
    <property type="evidence" value="ECO:0000250"/>
    <property type="project" value="UniProtKB"/>
</dbReference>
<dbReference type="GO" id="GO:0004483">
    <property type="term" value="F:mRNA (nucleoside-2'-O-)-methyltransferase activity"/>
    <property type="evidence" value="ECO:0000250"/>
    <property type="project" value="UniProtKB"/>
</dbReference>
<dbReference type="GO" id="GO:0003676">
    <property type="term" value="F:nucleic acid binding"/>
    <property type="evidence" value="ECO:0007669"/>
    <property type="project" value="InterPro"/>
</dbReference>
<dbReference type="GO" id="GO:0006370">
    <property type="term" value="P:7-methylguanosine mRNA capping"/>
    <property type="evidence" value="ECO:0000250"/>
    <property type="project" value="UniProtKB"/>
</dbReference>
<dbReference type="GO" id="GO:0032259">
    <property type="term" value="P:methylation"/>
    <property type="evidence" value="ECO:0007669"/>
    <property type="project" value="UniProtKB-KW"/>
</dbReference>
<dbReference type="GO" id="GO:0006397">
    <property type="term" value="P:mRNA processing"/>
    <property type="evidence" value="ECO:0000250"/>
    <property type="project" value="UniProtKB"/>
</dbReference>
<dbReference type="CDD" id="cd00201">
    <property type="entry name" value="WW"/>
    <property type="match status" value="1"/>
</dbReference>
<dbReference type="FunFam" id="3.30.470.30:FF:000006">
    <property type="entry name" value="Cap methyltransferase 1"/>
    <property type="match status" value="1"/>
</dbReference>
<dbReference type="FunFam" id="3.40.50.12760:FF:000001">
    <property type="entry name" value="Cap methyltransferase 1"/>
    <property type="match status" value="1"/>
</dbReference>
<dbReference type="Gene3D" id="2.20.70.10">
    <property type="match status" value="1"/>
</dbReference>
<dbReference type="Gene3D" id="3.40.50.12760">
    <property type="match status" value="1"/>
</dbReference>
<dbReference type="Gene3D" id="3.30.470.30">
    <property type="entry name" value="DNA ligase/mRNA capping enzyme"/>
    <property type="match status" value="1"/>
</dbReference>
<dbReference type="InterPro" id="IPR000467">
    <property type="entry name" value="G_patch_dom"/>
</dbReference>
<dbReference type="InterPro" id="IPR050851">
    <property type="entry name" value="mRNA_Cap_2O-Ribose_MeTrfase"/>
</dbReference>
<dbReference type="InterPro" id="IPR002877">
    <property type="entry name" value="RNA_MeTrfase_FtsJ_dom"/>
</dbReference>
<dbReference type="InterPro" id="IPR025816">
    <property type="entry name" value="RrmJ-type_MeTrfase"/>
</dbReference>
<dbReference type="InterPro" id="IPR029063">
    <property type="entry name" value="SAM-dependent_MTases_sf"/>
</dbReference>
<dbReference type="InterPro" id="IPR001202">
    <property type="entry name" value="WW_dom"/>
</dbReference>
<dbReference type="InterPro" id="IPR036020">
    <property type="entry name" value="WW_dom_sf"/>
</dbReference>
<dbReference type="PANTHER" id="PTHR16121:SF0">
    <property type="entry name" value="CAP-SPECIFIC MRNA (NUCLEOSIDE-2'-O-)-METHYLTRANSFERASE 1"/>
    <property type="match status" value="1"/>
</dbReference>
<dbReference type="PANTHER" id="PTHR16121">
    <property type="entry name" value="CAP-SPECIFIC MRNA (NUCLEOSIDE-2'-O-)-METHYLTRANSFERASE 1-RELATED"/>
    <property type="match status" value="1"/>
</dbReference>
<dbReference type="Pfam" id="PF01728">
    <property type="entry name" value="FtsJ"/>
    <property type="match status" value="1"/>
</dbReference>
<dbReference type="Pfam" id="PF01585">
    <property type="entry name" value="G-patch"/>
    <property type="match status" value="1"/>
</dbReference>
<dbReference type="Pfam" id="PF00397">
    <property type="entry name" value="WW"/>
    <property type="match status" value="1"/>
</dbReference>
<dbReference type="SMART" id="SM00443">
    <property type="entry name" value="G_patch"/>
    <property type="match status" value="1"/>
</dbReference>
<dbReference type="SMART" id="SM00456">
    <property type="entry name" value="WW"/>
    <property type="match status" value="1"/>
</dbReference>
<dbReference type="SUPFAM" id="SSF56091">
    <property type="entry name" value="DNA ligase/mRNA capping enzyme, catalytic domain"/>
    <property type="match status" value="1"/>
</dbReference>
<dbReference type="SUPFAM" id="SSF53335">
    <property type="entry name" value="S-adenosyl-L-methionine-dependent methyltransferases"/>
    <property type="match status" value="1"/>
</dbReference>
<dbReference type="SUPFAM" id="SSF51045">
    <property type="entry name" value="WW domain"/>
    <property type="match status" value="1"/>
</dbReference>
<dbReference type="PROSITE" id="PS50174">
    <property type="entry name" value="G_PATCH"/>
    <property type="match status" value="1"/>
</dbReference>
<dbReference type="PROSITE" id="PS51613">
    <property type="entry name" value="SAM_MT_RRMJ"/>
    <property type="match status" value="1"/>
</dbReference>
<dbReference type="PROSITE" id="PS01159">
    <property type="entry name" value="WW_DOMAIN_1"/>
    <property type="match status" value="1"/>
</dbReference>
<dbReference type="PROSITE" id="PS50020">
    <property type="entry name" value="WW_DOMAIN_2"/>
    <property type="match status" value="1"/>
</dbReference>
<evidence type="ECO:0000250" key="1">
    <source>
        <dbReference type="UniProtKB" id="Q8N1G2"/>
    </source>
</evidence>
<evidence type="ECO:0000255" key="2">
    <source>
        <dbReference type="PROSITE-ProRule" id="PRU00092"/>
    </source>
</evidence>
<evidence type="ECO:0000255" key="3">
    <source>
        <dbReference type="PROSITE-ProRule" id="PRU00224"/>
    </source>
</evidence>
<evidence type="ECO:0000255" key="4">
    <source>
        <dbReference type="PROSITE-ProRule" id="PRU00768"/>
    </source>
</evidence>
<evidence type="ECO:0000255" key="5">
    <source>
        <dbReference type="PROSITE-ProRule" id="PRU00945"/>
    </source>
</evidence>
<evidence type="ECO:0000256" key="6">
    <source>
        <dbReference type="SAM" id="MobiDB-lite"/>
    </source>
</evidence>
<keyword id="KW-0489">Methyltransferase</keyword>
<keyword id="KW-0506">mRNA capping</keyword>
<keyword id="KW-0507">mRNA processing</keyword>
<keyword id="KW-0539">Nucleus</keyword>
<keyword id="KW-1185">Reference proteome</keyword>
<keyword id="KW-0949">S-adenosyl-L-methionine</keyword>
<keyword id="KW-0808">Transferase</keyword>